<gene>
    <name type="primary">MT-CYB</name>
    <name type="synonym">COB</name>
    <name type="synonym">CYTB</name>
    <name type="synonym">MTCYB</name>
</gene>
<evidence type="ECO:0000250" key="1"/>
<evidence type="ECO:0000250" key="2">
    <source>
        <dbReference type="UniProtKB" id="P00157"/>
    </source>
</evidence>
<evidence type="ECO:0000250" key="3">
    <source>
        <dbReference type="UniProtKB" id="P00163"/>
    </source>
</evidence>
<evidence type="ECO:0000255" key="4">
    <source>
        <dbReference type="PROSITE-ProRule" id="PRU00967"/>
    </source>
</evidence>
<evidence type="ECO:0000255" key="5">
    <source>
        <dbReference type="PROSITE-ProRule" id="PRU00968"/>
    </source>
</evidence>
<evidence type="ECO:0000305" key="6"/>
<reference key="1">
    <citation type="journal article" date="1988" name="J. Mol. Biol.">
        <title>Nucleotide sequence and gene organization of sea urchin mitochondrial DNA.</title>
        <authorList>
            <person name="Jacobs H.T."/>
            <person name="Elliott D.J."/>
            <person name="Math V.B."/>
            <person name="Farquharson A."/>
        </authorList>
    </citation>
    <scope>NUCLEOTIDE SEQUENCE [GENOMIC DNA]</scope>
</reference>
<organism>
    <name type="scientific">Strongylocentrotus purpuratus</name>
    <name type="common">Purple sea urchin</name>
    <dbReference type="NCBI Taxonomy" id="7668"/>
    <lineage>
        <taxon>Eukaryota</taxon>
        <taxon>Metazoa</taxon>
        <taxon>Echinodermata</taxon>
        <taxon>Eleutherozoa</taxon>
        <taxon>Echinozoa</taxon>
        <taxon>Echinoidea</taxon>
        <taxon>Euechinoidea</taxon>
        <taxon>Echinacea</taxon>
        <taxon>Camarodonta</taxon>
        <taxon>Echinidea</taxon>
        <taxon>Strongylocentrotidae</taxon>
        <taxon>Strongylocentrotus</taxon>
    </lineage>
</organism>
<protein>
    <recommendedName>
        <fullName>Cytochrome b</fullName>
    </recommendedName>
    <alternativeName>
        <fullName>Complex III subunit 3</fullName>
    </alternativeName>
    <alternativeName>
        <fullName>Complex III subunit III</fullName>
    </alternativeName>
    <alternativeName>
        <fullName>Cytochrome b-c1 complex subunit 3</fullName>
    </alternativeName>
    <alternativeName>
        <fullName>Ubiquinol-cytochrome-c reductase complex cytochrome b subunit</fullName>
    </alternativeName>
</protein>
<comment type="function">
    <text evidence="2">Component of the ubiquinol-cytochrome c reductase complex (complex III or cytochrome b-c1 complex) that is part of the mitochondrial respiratory chain. The b-c1 complex mediates electron transfer from ubiquinol to cytochrome c. Contributes to the generation of a proton gradient across the mitochondrial membrane that is then used for ATP synthesis.</text>
</comment>
<comment type="cofactor">
    <cofactor evidence="2">
        <name>heme b</name>
        <dbReference type="ChEBI" id="CHEBI:60344"/>
    </cofactor>
    <text evidence="2">Binds 2 heme b groups non-covalently.</text>
</comment>
<comment type="subunit">
    <text evidence="2">The main subunits of complex b-c1 are: cytochrome b, cytochrome c1 and the Rieske protein.</text>
</comment>
<comment type="subcellular location">
    <subcellularLocation>
        <location evidence="3">Mitochondrion inner membrane</location>
        <topology evidence="3">Multi-pass membrane protein</topology>
    </subcellularLocation>
</comment>
<comment type="miscellaneous">
    <text evidence="1">Heme 1 (or BL or b562) is low-potential and absorbs at about 562 nm, and heme 2 (or BH or b566) is high-potential and absorbs at about 566 nm.</text>
</comment>
<comment type="similarity">
    <text evidence="4 5">Belongs to the cytochrome b family.</text>
</comment>
<comment type="caution">
    <text evidence="2">The full-length protein contains only eight transmembrane helices, not nine as predicted by bioinformatics tools.</text>
</comment>
<comment type="sequence caution" evidence="6">
    <conflict type="erroneous initiation">
        <sequence resource="EMBL-CDS" id="CAA31162"/>
    </conflict>
</comment>
<keyword id="KW-0249">Electron transport</keyword>
<keyword id="KW-0349">Heme</keyword>
<keyword id="KW-0408">Iron</keyword>
<keyword id="KW-0472">Membrane</keyword>
<keyword id="KW-0479">Metal-binding</keyword>
<keyword id="KW-0496">Mitochondrion</keyword>
<keyword id="KW-0999">Mitochondrion inner membrane</keyword>
<keyword id="KW-1185">Reference proteome</keyword>
<keyword id="KW-0679">Respiratory chain</keyword>
<keyword id="KW-0812">Transmembrane</keyword>
<keyword id="KW-1133">Transmembrane helix</keyword>
<keyword id="KW-0813">Transport</keyword>
<keyword id="KW-0830">Ubiquinone</keyword>
<geneLocation type="mitochondrion"/>
<dbReference type="EMBL" id="X12631">
    <property type="protein sequence ID" value="CAA31162.1"/>
    <property type="status" value="ALT_INIT"/>
    <property type="molecule type" value="Genomic_DNA"/>
</dbReference>
<dbReference type="PIR" id="S01511">
    <property type="entry name" value="S01511"/>
</dbReference>
<dbReference type="RefSeq" id="NP_006977.1">
    <property type="nucleotide sequence ID" value="NC_001453.1"/>
</dbReference>
<dbReference type="SMR" id="P15547"/>
<dbReference type="FunCoup" id="P15547">
    <property type="interactions" value="20"/>
</dbReference>
<dbReference type="STRING" id="7668.P15547"/>
<dbReference type="EnsemblMetazoa" id="GeneID_2652727_df_mr">
    <property type="protein sequence ID" value="NP_006977"/>
    <property type="gene ID" value="GeneID_2652727"/>
</dbReference>
<dbReference type="GeneID" id="2652727"/>
<dbReference type="KEGG" id="spu:2652727"/>
<dbReference type="CTD" id="4519"/>
<dbReference type="InParanoid" id="P15547"/>
<dbReference type="OMA" id="NISAWWN"/>
<dbReference type="OrthoDB" id="6753971at2759"/>
<dbReference type="PhylomeDB" id="P15547"/>
<dbReference type="Proteomes" id="UP000007110">
    <property type="component" value="Unassembled WGS sequence"/>
</dbReference>
<dbReference type="GO" id="GO:0016020">
    <property type="term" value="C:membrane"/>
    <property type="evidence" value="ECO:0000318"/>
    <property type="project" value="GO_Central"/>
</dbReference>
<dbReference type="GO" id="GO:0005743">
    <property type="term" value="C:mitochondrial inner membrane"/>
    <property type="evidence" value="ECO:0007669"/>
    <property type="project" value="UniProtKB-SubCell"/>
</dbReference>
<dbReference type="GO" id="GO:0045275">
    <property type="term" value="C:respiratory chain complex III"/>
    <property type="evidence" value="ECO:0000318"/>
    <property type="project" value="GO_Central"/>
</dbReference>
<dbReference type="GO" id="GO:0046872">
    <property type="term" value="F:metal ion binding"/>
    <property type="evidence" value="ECO:0007669"/>
    <property type="project" value="UniProtKB-KW"/>
</dbReference>
<dbReference type="GO" id="GO:0008121">
    <property type="term" value="F:ubiquinol-cytochrome-c reductase activity"/>
    <property type="evidence" value="ECO:0007669"/>
    <property type="project" value="InterPro"/>
</dbReference>
<dbReference type="GO" id="GO:0006122">
    <property type="term" value="P:mitochondrial electron transport, ubiquinol to cytochrome c"/>
    <property type="evidence" value="ECO:0000318"/>
    <property type="project" value="GO_Central"/>
</dbReference>
<dbReference type="CDD" id="cd00290">
    <property type="entry name" value="cytochrome_b_C"/>
    <property type="match status" value="1"/>
</dbReference>
<dbReference type="CDD" id="cd00284">
    <property type="entry name" value="Cytochrome_b_N"/>
    <property type="match status" value="1"/>
</dbReference>
<dbReference type="FunFam" id="1.20.810.10:FF:000002">
    <property type="entry name" value="Cytochrome b"/>
    <property type="match status" value="1"/>
</dbReference>
<dbReference type="Gene3D" id="1.20.810.10">
    <property type="entry name" value="Cytochrome Bc1 Complex, Chain C"/>
    <property type="match status" value="1"/>
</dbReference>
<dbReference type="InterPro" id="IPR005798">
    <property type="entry name" value="Cyt_b/b6_C"/>
</dbReference>
<dbReference type="InterPro" id="IPR036150">
    <property type="entry name" value="Cyt_b/b6_C_sf"/>
</dbReference>
<dbReference type="InterPro" id="IPR005797">
    <property type="entry name" value="Cyt_b/b6_N"/>
</dbReference>
<dbReference type="InterPro" id="IPR027387">
    <property type="entry name" value="Cytb/b6-like_sf"/>
</dbReference>
<dbReference type="InterPro" id="IPR030689">
    <property type="entry name" value="Cytochrome_b"/>
</dbReference>
<dbReference type="InterPro" id="IPR048260">
    <property type="entry name" value="Cytochrome_b_C_euk/bac"/>
</dbReference>
<dbReference type="InterPro" id="IPR048259">
    <property type="entry name" value="Cytochrome_b_N_euk/bac"/>
</dbReference>
<dbReference type="InterPro" id="IPR016174">
    <property type="entry name" value="Di-haem_cyt_TM"/>
</dbReference>
<dbReference type="PANTHER" id="PTHR19271">
    <property type="entry name" value="CYTOCHROME B"/>
    <property type="match status" value="1"/>
</dbReference>
<dbReference type="PANTHER" id="PTHR19271:SF16">
    <property type="entry name" value="CYTOCHROME B"/>
    <property type="match status" value="1"/>
</dbReference>
<dbReference type="Pfam" id="PF00032">
    <property type="entry name" value="Cytochrom_B_C"/>
    <property type="match status" value="1"/>
</dbReference>
<dbReference type="Pfam" id="PF00033">
    <property type="entry name" value="Cytochrome_B"/>
    <property type="match status" value="1"/>
</dbReference>
<dbReference type="PIRSF" id="PIRSF038885">
    <property type="entry name" value="COB"/>
    <property type="match status" value="1"/>
</dbReference>
<dbReference type="SUPFAM" id="SSF81648">
    <property type="entry name" value="a domain/subunit of cytochrome bc1 complex (Ubiquinol-cytochrome c reductase)"/>
    <property type="match status" value="1"/>
</dbReference>
<dbReference type="SUPFAM" id="SSF81342">
    <property type="entry name" value="Transmembrane di-heme cytochromes"/>
    <property type="match status" value="1"/>
</dbReference>
<dbReference type="PROSITE" id="PS51003">
    <property type="entry name" value="CYTB_CTER"/>
    <property type="match status" value="1"/>
</dbReference>
<dbReference type="PROSITE" id="PS51002">
    <property type="entry name" value="CYTB_NTER"/>
    <property type="match status" value="1"/>
</dbReference>
<sequence>MAAPLRKEHPIFRILNSTFVDLPLPSNLSIWWNSGSLLGLCLVVQILTGIFLAMHYTADITLAFSSVMHILRDVNYGWFLRYVHANGVSLFFICMYCHIGRGLYYGSYNKIETWNVGVILFLVTILTAFMGYVLVWGQMSFWAATVITNLVSAIPYIGTIIVQWLWGGFSVDNATLTRFFPFHFLFPFIIAALAVIHLVFLHNSGANNPFAFNSNYDKAPFHIYFTTKDTVGFILLVAALFSLALLFPGALNDPENFIPANPLVTPPHIQPEWYFLFAYAILRSIPNKLGGVIALVAAILVLFLMPLLNTSKNESNSFRPLSQAAFWLLVAHLFILTWIGSQPVEYPYVLLGQVASVLYFSLFIFGFPIVSSIENKIIFS</sequence>
<accession>P15547</accession>
<feature type="chain" id="PRO_0000061619" description="Cytochrome b">
    <location>
        <begin position="1"/>
        <end position="380"/>
    </location>
</feature>
<feature type="transmembrane region" description="Helical" evidence="2">
    <location>
        <begin position="34"/>
        <end position="54"/>
    </location>
</feature>
<feature type="transmembrane region" description="Helical" evidence="2">
    <location>
        <begin position="78"/>
        <end position="99"/>
    </location>
</feature>
<feature type="transmembrane region" description="Helical" evidence="2">
    <location>
        <begin position="114"/>
        <end position="134"/>
    </location>
</feature>
<feature type="transmembrane region" description="Helical" evidence="2">
    <location>
        <begin position="179"/>
        <end position="199"/>
    </location>
</feature>
<feature type="transmembrane region" description="Helical" evidence="2">
    <location>
        <begin position="227"/>
        <end position="247"/>
    </location>
</feature>
<feature type="transmembrane region" description="Helical" evidence="2">
    <location>
        <begin position="289"/>
        <end position="309"/>
    </location>
</feature>
<feature type="transmembrane region" description="Helical" evidence="2">
    <location>
        <begin position="321"/>
        <end position="341"/>
    </location>
</feature>
<feature type="transmembrane region" description="Helical" evidence="2">
    <location>
        <begin position="348"/>
        <end position="369"/>
    </location>
</feature>
<feature type="binding site" description="axial binding residue" evidence="2">
    <location>
        <position position="84"/>
    </location>
    <ligand>
        <name>heme b</name>
        <dbReference type="ChEBI" id="CHEBI:60344"/>
        <label>b562</label>
    </ligand>
    <ligandPart>
        <name>Fe</name>
        <dbReference type="ChEBI" id="CHEBI:18248"/>
    </ligandPart>
</feature>
<feature type="binding site" description="axial binding residue" evidence="2">
    <location>
        <position position="98"/>
    </location>
    <ligand>
        <name>heme b</name>
        <dbReference type="ChEBI" id="CHEBI:60344"/>
        <label>b566</label>
    </ligand>
    <ligandPart>
        <name>Fe</name>
        <dbReference type="ChEBI" id="CHEBI:18248"/>
    </ligandPart>
</feature>
<feature type="binding site" description="axial binding residue" evidence="2">
    <location>
        <position position="183"/>
    </location>
    <ligand>
        <name>heme b</name>
        <dbReference type="ChEBI" id="CHEBI:60344"/>
        <label>b562</label>
    </ligand>
    <ligandPart>
        <name>Fe</name>
        <dbReference type="ChEBI" id="CHEBI:18248"/>
    </ligandPart>
</feature>
<feature type="binding site" description="axial binding residue" evidence="2">
    <location>
        <position position="197"/>
    </location>
    <ligand>
        <name>heme b</name>
        <dbReference type="ChEBI" id="CHEBI:60344"/>
        <label>b566</label>
    </ligand>
    <ligandPart>
        <name>Fe</name>
        <dbReference type="ChEBI" id="CHEBI:18248"/>
    </ligandPart>
</feature>
<feature type="binding site" evidence="2">
    <location>
        <position position="202"/>
    </location>
    <ligand>
        <name>a ubiquinone</name>
        <dbReference type="ChEBI" id="CHEBI:16389"/>
    </ligand>
</feature>
<proteinExistence type="inferred from homology"/>
<name>CYB_STRPU</name>